<comment type="similarity">
    <text evidence="3">Belongs to the lipase/esterase LIP3/BchO family.</text>
</comment>
<protein>
    <recommendedName>
        <fullName>Putative esterase/lipase 2</fullName>
        <ecNumber>3.1.-.-</ecNumber>
    </recommendedName>
</protein>
<keyword id="KW-0378">Hydrolase</keyword>
<keyword id="KW-1185">Reference proteome</keyword>
<keyword id="KW-0719">Serine esterase</keyword>
<feature type="chain" id="PRO_0000207077" description="Putative esterase/lipase 2">
    <location>
        <begin position="1"/>
        <end position="268"/>
    </location>
</feature>
<feature type="active site" evidence="2">
    <location>
        <position position="28"/>
    </location>
</feature>
<feature type="active site" description="Charge relay system" evidence="1">
    <location>
        <position position="96"/>
    </location>
</feature>
<sequence length="268" mass="30785">MASSKSDPFQSIFAFKPHRKRHNFIFLHGFGSEYSSFKHVFKLFEKKRWSFFAFNFPGHGNNQSNSVDELKLKHYVELVCDFIIQKRLKKVVLVGHSMGGAIAVLVNAVLRERIKALVLVAPMNQTSFVVSKKRILDTLFTRSPKNQQDFIEHTDDKKSIVNFFVGAFKKRVNFKTLYSDMVQNAKYGNDYLEAGYNAIKDKPTLVVLGSNDIVTPTKASVEYLAKHSETIIFKIIDGVGHSPHYYAPKLFFDYIGEFLDNIKRNKDK</sequence>
<name>ESL2_MYCPN</name>
<gene>
    <name type="ordered locus">MPN_473</name>
    <name type="ORF">MP368</name>
</gene>
<evidence type="ECO:0000250" key="1"/>
<evidence type="ECO:0000255" key="2"/>
<evidence type="ECO:0000305" key="3"/>
<proteinExistence type="inferred from homology"/>
<accession>P75311</accession>
<organism>
    <name type="scientific">Mycoplasma pneumoniae (strain ATCC 29342 / M129 / Subtype 1)</name>
    <name type="common">Mycoplasmoides pneumoniae</name>
    <dbReference type="NCBI Taxonomy" id="272634"/>
    <lineage>
        <taxon>Bacteria</taxon>
        <taxon>Bacillati</taxon>
        <taxon>Mycoplasmatota</taxon>
        <taxon>Mycoplasmoidales</taxon>
        <taxon>Mycoplasmoidaceae</taxon>
        <taxon>Mycoplasmoides</taxon>
    </lineage>
</organism>
<reference key="1">
    <citation type="journal article" date="1996" name="Nucleic Acids Res.">
        <title>Complete sequence analysis of the genome of the bacterium Mycoplasma pneumoniae.</title>
        <authorList>
            <person name="Himmelreich R."/>
            <person name="Hilbert H."/>
            <person name="Plagens H."/>
            <person name="Pirkl E."/>
            <person name="Li B.-C."/>
            <person name="Herrmann R."/>
        </authorList>
    </citation>
    <scope>NUCLEOTIDE SEQUENCE [LARGE SCALE GENOMIC DNA]</scope>
    <source>
        <strain>ATCC 29342 / M129 / Subtype 1</strain>
    </source>
</reference>
<dbReference type="EC" id="3.1.-.-"/>
<dbReference type="EMBL" id="U00089">
    <property type="protein sequence ID" value="AAB96016.1"/>
    <property type="molecule type" value="Genomic_DNA"/>
</dbReference>
<dbReference type="PIR" id="S73694">
    <property type="entry name" value="S73694"/>
</dbReference>
<dbReference type="RefSeq" id="NP_110161.1">
    <property type="nucleotide sequence ID" value="NC_000912.1"/>
</dbReference>
<dbReference type="RefSeq" id="WP_010874829.1">
    <property type="nucleotide sequence ID" value="NZ_OU342337.1"/>
</dbReference>
<dbReference type="SMR" id="P75311"/>
<dbReference type="STRING" id="272634.MPN_473"/>
<dbReference type="ESTHER" id="mycpn-esl2">
    <property type="family name" value="AlphaBeta_hydrolase"/>
</dbReference>
<dbReference type="EnsemblBacteria" id="AAB96016">
    <property type="protein sequence ID" value="AAB96016"/>
    <property type="gene ID" value="MPN_473"/>
</dbReference>
<dbReference type="KEGG" id="mpn:MPN_473"/>
<dbReference type="PATRIC" id="fig|272634.6.peg.511"/>
<dbReference type="HOGENOM" id="CLU_020336_41_1_14"/>
<dbReference type="OrthoDB" id="403987at2"/>
<dbReference type="BioCyc" id="MPNE272634:G1GJ3-777-MONOMER"/>
<dbReference type="Proteomes" id="UP000000808">
    <property type="component" value="Chromosome"/>
</dbReference>
<dbReference type="GO" id="GO:0016020">
    <property type="term" value="C:membrane"/>
    <property type="evidence" value="ECO:0007669"/>
    <property type="project" value="TreeGrafter"/>
</dbReference>
<dbReference type="GO" id="GO:0052689">
    <property type="term" value="F:carboxylic ester hydrolase activity"/>
    <property type="evidence" value="ECO:0007669"/>
    <property type="project" value="UniProtKB-KW"/>
</dbReference>
<dbReference type="Gene3D" id="3.40.50.1820">
    <property type="entry name" value="alpha/beta hydrolase"/>
    <property type="match status" value="1"/>
</dbReference>
<dbReference type="InterPro" id="IPR000073">
    <property type="entry name" value="AB_hydrolase_1"/>
</dbReference>
<dbReference type="InterPro" id="IPR029058">
    <property type="entry name" value="AB_hydrolase_fold"/>
</dbReference>
<dbReference type="InterPro" id="IPR050266">
    <property type="entry name" value="AB_hydrolase_sf"/>
</dbReference>
<dbReference type="InterPro" id="IPR022742">
    <property type="entry name" value="Hydrolase_4"/>
</dbReference>
<dbReference type="PANTHER" id="PTHR43798:SF33">
    <property type="entry name" value="HYDROLASE, PUTATIVE (AFU_ORTHOLOGUE AFUA_2G14860)-RELATED"/>
    <property type="match status" value="1"/>
</dbReference>
<dbReference type="PANTHER" id="PTHR43798">
    <property type="entry name" value="MONOACYLGLYCEROL LIPASE"/>
    <property type="match status" value="1"/>
</dbReference>
<dbReference type="Pfam" id="PF12146">
    <property type="entry name" value="Hydrolase_4"/>
    <property type="match status" value="1"/>
</dbReference>
<dbReference type="PRINTS" id="PR00111">
    <property type="entry name" value="ABHYDROLASE"/>
</dbReference>
<dbReference type="SUPFAM" id="SSF53474">
    <property type="entry name" value="alpha/beta-Hydrolases"/>
    <property type="match status" value="1"/>
</dbReference>